<keyword id="KW-0028">Amino-acid biosynthesis</keyword>
<keyword id="KW-0963">Cytoplasm</keyword>
<keyword id="KW-0368">Histidine biosynthesis</keyword>
<keyword id="KW-0456">Lyase</keyword>
<evidence type="ECO:0000255" key="1">
    <source>
        <dbReference type="HAMAP-Rule" id="MF_00076"/>
    </source>
</evidence>
<accession>Q1B7G6</accession>
<gene>
    <name evidence="1" type="primary">hisB</name>
    <name type="ordered locus">Mmcs_3061</name>
</gene>
<comment type="catalytic activity">
    <reaction evidence="1">
        <text>D-erythro-1-(imidazol-4-yl)glycerol 3-phosphate = 3-(imidazol-4-yl)-2-oxopropyl phosphate + H2O</text>
        <dbReference type="Rhea" id="RHEA:11040"/>
        <dbReference type="ChEBI" id="CHEBI:15377"/>
        <dbReference type="ChEBI" id="CHEBI:57766"/>
        <dbReference type="ChEBI" id="CHEBI:58278"/>
        <dbReference type="EC" id="4.2.1.19"/>
    </reaction>
</comment>
<comment type="pathway">
    <text evidence="1">Amino-acid biosynthesis; L-histidine biosynthesis; L-histidine from 5-phospho-alpha-D-ribose 1-diphosphate: step 6/9.</text>
</comment>
<comment type="subcellular location">
    <subcellularLocation>
        <location evidence="1">Cytoplasm</location>
    </subcellularLocation>
</comment>
<comment type="similarity">
    <text evidence="1">Belongs to the imidazoleglycerol-phosphate dehydratase family.</text>
</comment>
<name>HIS7_MYCSS</name>
<sequence length="208" mass="22759">MTDMLTGTRRARVERKTKESDIVVDLDLDGTGIVDIRTGVPFFDHMLTSLGSHASFDLTVHATGDIEIEGHHTVEDTAIVLGQALGQALGDKKGIRRFGDAFIPMDETLAHAAVDVSGRPYFVHTGEPDYMVEFTIAGSSAPYHTVINRHVFESLAFNARIALHVRTIYGRDPHHITEAQYKAVARALRQAVELDPRVTGVPSTKGSL</sequence>
<feature type="chain" id="PRO_1000010304" description="Imidazoleglycerol-phosphate dehydratase">
    <location>
        <begin position="1"/>
        <end position="208"/>
    </location>
</feature>
<proteinExistence type="inferred from homology"/>
<organism>
    <name type="scientific">Mycobacterium sp. (strain MCS)</name>
    <dbReference type="NCBI Taxonomy" id="164756"/>
    <lineage>
        <taxon>Bacteria</taxon>
        <taxon>Bacillati</taxon>
        <taxon>Actinomycetota</taxon>
        <taxon>Actinomycetes</taxon>
        <taxon>Mycobacteriales</taxon>
        <taxon>Mycobacteriaceae</taxon>
        <taxon>Mycobacterium</taxon>
    </lineage>
</organism>
<reference key="1">
    <citation type="submission" date="2006-06" db="EMBL/GenBank/DDBJ databases">
        <title>Complete sequence of chromosome of Mycobacterium sp. MCS.</title>
        <authorList>
            <consortium name="US DOE Joint Genome Institute"/>
            <person name="Copeland A."/>
            <person name="Lucas S."/>
            <person name="Lapidus A."/>
            <person name="Barry K."/>
            <person name="Detter J.C."/>
            <person name="Glavina del Rio T."/>
            <person name="Hammon N."/>
            <person name="Israni S."/>
            <person name="Dalin E."/>
            <person name="Tice H."/>
            <person name="Pitluck S."/>
            <person name="Martinez M."/>
            <person name="Schmutz J."/>
            <person name="Larimer F."/>
            <person name="Land M."/>
            <person name="Hauser L."/>
            <person name="Kyrpides N."/>
            <person name="Kim E."/>
            <person name="Miller C.D."/>
            <person name="Hughes J.E."/>
            <person name="Anderson A.J."/>
            <person name="Sims R.C."/>
            <person name="Richardson P."/>
        </authorList>
    </citation>
    <scope>NUCLEOTIDE SEQUENCE [LARGE SCALE GENOMIC DNA]</scope>
    <source>
        <strain>MCS</strain>
    </source>
</reference>
<protein>
    <recommendedName>
        <fullName evidence="1">Imidazoleglycerol-phosphate dehydratase</fullName>
        <shortName evidence="1">IGPD</shortName>
        <ecNumber evidence="1">4.2.1.19</ecNumber>
    </recommendedName>
</protein>
<dbReference type="EC" id="4.2.1.19" evidence="1"/>
<dbReference type="EMBL" id="CP000384">
    <property type="protein sequence ID" value="ABG09168.1"/>
    <property type="molecule type" value="Genomic_DNA"/>
</dbReference>
<dbReference type="SMR" id="Q1B7G6"/>
<dbReference type="KEGG" id="mmc:Mmcs_3061"/>
<dbReference type="HOGENOM" id="CLU_044308_3_0_11"/>
<dbReference type="BioCyc" id="MSP164756:G1G6O-3124-MONOMER"/>
<dbReference type="UniPathway" id="UPA00031">
    <property type="reaction ID" value="UER00011"/>
</dbReference>
<dbReference type="GO" id="GO:0005737">
    <property type="term" value="C:cytoplasm"/>
    <property type="evidence" value="ECO:0007669"/>
    <property type="project" value="UniProtKB-SubCell"/>
</dbReference>
<dbReference type="GO" id="GO:0004424">
    <property type="term" value="F:imidazoleglycerol-phosphate dehydratase activity"/>
    <property type="evidence" value="ECO:0007669"/>
    <property type="project" value="UniProtKB-UniRule"/>
</dbReference>
<dbReference type="GO" id="GO:0000105">
    <property type="term" value="P:L-histidine biosynthetic process"/>
    <property type="evidence" value="ECO:0007669"/>
    <property type="project" value="UniProtKB-UniRule"/>
</dbReference>
<dbReference type="CDD" id="cd07914">
    <property type="entry name" value="IGPD"/>
    <property type="match status" value="1"/>
</dbReference>
<dbReference type="FunFam" id="3.30.230.40:FF:000001">
    <property type="entry name" value="Imidazoleglycerol-phosphate dehydratase HisB"/>
    <property type="match status" value="1"/>
</dbReference>
<dbReference type="FunFam" id="3.30.230.40:FF:000003">
    <property type="entry name" value="Imidazoleglycerol-phosphate dehydratase HisB"/>
    <property type="match status" value="1"/>
</dbReference>
<dbReference type="Gene3D" id="3.30.230.40">
    <property type="entry name" value="Imidazole glycerol phosphate dehydratase, domain 1"/>
    <property type="match status" value="2"/>
</dbReference>
<dbReference type="HAMAP" id="MF_00076">
    <property type="entry name" value="HisB"/>
    <property type="match status" value="1"/>
</dbReference>
<dbReference type="InterPro" id="IPR038494">
    <property type="entry name" value="IGPD_sf"/>
</dbReference>
<dbReference type="InterPro" id="IPR000807">
    <property type="entry name" value="ImidazoleglycerolP_deHydtase"/>
</dbReference>
<dbReference type="InterPro" id="IPR020565">
    <property type="entry name" value="ImidazoleglycerP_deHydtase_CS"/>
</dbReference>
<dbReference type="InterPro" id="IPR020568">
    <property type="entry name" value="Ribosomal_Su5_D2-typ_SF"/>
</dbReference>
<dbReference type="NCBIfam" id="NF002110">
    <property type="entry name" value="PRK00951.1-6"/>
    <property type="match status" value="1"/>
</dbReference>
<dbReference type="NCBIfam" id="NF002111">
    <property type="entry name" value="PRK00951.2-1"/>
    <property type="match status" value="1"/>
</dbReference>
<dbReference type="NCBIfam" id="NF002114">
    <property type="entry name" value="PRK00951.2-4"/>
    <property type="match status" value="1"/>
</dbReference>
<dbReference type="PANTHER" id="PTHR23133:SF2">
    <property type="entry name" value="IMIDAZOLEGLYCEROL-PHOSPHATE DEHYDRATASE"/>
    <property type="match status" value="1"/>
</dbReference>
<dbReference type="PANTHER" id="PTHR23133">
    <property type="entry name" value="IMIDAZOLEGLYCEROL-PHOSPHATE DEHYDRATASE HIS7"/>
    <property type="match status" value="1"/>
</dbReference>
<dbReference type="Pfam" id="PF00475">
    <property type="entry name" value="IGPD"/>
    <property type="match status" value="1"/>
</dbReference>
<dbReference type="SUPFAM" id="SSF54211">
    <property type="entry name" value="Ribosomal protein S5 domain 2-like"/>
    <property type="match status" value="2"/>
</dbReference>
<dbReference type="PROSITE" id="PS00954">
    <property type="entry name" value="IGP_DEHYDRATASE_1"/>
    <property type="match status" value="1"/>
</dbReference>
<dbReference type="PROSITE" id="PS00955">
    <property type="entry name" value="IGP_DEHYDRATASE_2"/>
    <property type="match status" value="1"/>
</dbReference>